<comment type="function">
    <text evidence="1">Translocates 4-amino-4-deoxy-L-arabinose-phosphoundecaprenol (alpha-L-Ara4N-phosphoundecaprenol) from the cytoplasmic to the periplasmic side of the inner membrane.</text>
</comment>
<comment type="pathway">
    <text evidence="1">Bacterial outer membrane biogenesis; lipopolysaccharide biosynthesis.</text>
</comment>
<comment type="subunit">
    <text evidence="1">Heterodimer of ArnE and ArnF.</text>
</comment>
<comment type="subcellular location">
    <subcellularLocation>
        <location evidence="1">Cell inner membrane</location>
        <topology evidence="1">Multi-pass membrane protein</topology>
    </subcellularLocation>
</comment>
<comment type="similarity">
    <text evidence="1">Belongs to the ArnE family.</text>
</comment>
<feature type="chain" id="PRO_0000382986" description="Probable 4-amino-4-deoxy-L-arabinose-phosphoundecaprenol flippase subunit ArnE">
    <location>
        <begin position="1"/>
        <end position="114"/>
    </location>
</feature>
<feature type="transmembrane region" description="Helical" evidence="1">
    <location>
        <begin position="41"/>
        <end position="61"/>
    </location>
</feature>
<feature type="transmembrane region" description="Helical" evidence="1">
    <location>
        <begin position="64"/>
        <end position="84"/>
    </location>
</feature>
<feature type="transmembrane region" description="Helical" evidence="1">
    <location>
        <begin position="91"/>
        <end position="111"/>
    </location>
</feature>
<feature type="domain" description="EamA" evidence="1">
    <location>
        <begin position="39"/>
        <end position="112"/>
    </location>
</feature>
<evidence type="ECO:0000255" key="1">
    <source>
        <dbReference type="HAMAP-Rule" id="MF_01869"/>
    </source>
</evidence>
<dbReference type="EMBL" id="CP000094">
    <property type="protein sequence ID" value="ABA74587.1"/>
    <property type="molecule type" value="Genomic_DNA"/>
</dbReference>
<dbReference type="RefSeq" id="WP_011334258.1">
    <property type="nucleotide sequence ID" value="NC_007492.2"/>
</dbReference>
<dbReference type="SMR" id="Q3KCB8"/>
<dbReference type="KEGG" id="pfo:Pfl01_2846"/>
<dbReference type="eggNOG" id="COG2076">
    <property type="taxonomic scope" value="Bacteria"/>
</dbReference>
<dbReference type="HOGENOM" id="CLU_131462_5_1_6"/>
<dbReference type="UniPathway" id="UPA00030"/>
<dbReference type="Proteomes" id="UP000002704">
    <property type="component" value="Chromosome"/>
</dbReference>
<dbReference type="GO" id="GO:0005886">
    <property type="term" value="C:plasma membrane"/>
    <property type="evidence" value="ECO:0007669"/>
    <property type="project" value="UniProtKB-SubCell"/>
</dbReference>
<dbReference type="GO" id="GO:1901505">
    <property type="term" value="F:carbohydrate derivative transmembrane transporter activity"/>
    <property type="evidence" value="ECO:0007669"/>
    <property type="project" value="InterPro"/>
</dbReference>
<dbReference type="GO" id="GO:0009245">
    <property type="term" value="P:lipid A biosynthetic process"/>
    <property type="evidence" value="ECO:0007669"/>
    <property type="project" value="UniProtKB-UniRule"/>
</dbReference>
<dbReference type="GO" id="GO:0009103">
    <property type="term" value="P:lipopolysaccharide biosynthetic process"/>
    <property type="evidence" value="ECO:0007669"/>
    <property type="project" value="UniProtKB-UniRule"/>
</dbReference>
<dbReference type="FunFam" id="1.10.3730.20:FF:000002">
    <property type="entry name" value="Probable 4-amino-4-deoxy-L-arabinose-phosphoundecaprenol flippase subunit ArnE"/>
    <property type="match status" value="1"/>
</dbReference>
<dbReference type="Gene3D" id="1.10.3730.20">
    <property type="match status" value="1"/>
</dbReference>
<dbReference type="HAMAP" id="MF_01869">
    <property type="entry name" value="Flippase_ArnE"/>
    <property type="match status" value="1"/>
</dbReference>
<dbReference type="InterPro" id="IPR000620">
    <property type="entry name" value="EamA_dom"/>
</dbReference>
<dbReference type="InterPro" id="IPR022883">
    <property type="entry name" value="Flippase_ArnE"/>
</dbReference>
<dbReference type="InterPro" id="IPR000390">
    <property type="entry name" value="Small_drug/metabolite_transptr"/>
</dbReference>
<dbReference type="NCBIfam" id="NF011625">
    <property type="entry name" value="PRK15051.1"/>
    <property type="match status" value="1"/>
</dbReference>
<dbReference type="PANTHER" id="PTHR30561:SF23">
    <property type="entry name" value="4-AMINO-4-DEOXY-L-ARABINOSE-PHOSPHOUNDECAPRENOL FLIPPASE SUBUNIT ARNE-RELATED"/>
    <property type="match status" value="1"/>
</dbReference>
<dbReference type="PANTHER" id="PTHR30561">
    <property type="entry name" value="SMR FAMILY PROTON-DEPENDENT DRUG EFFLUX TRANSPORTER SUGE"/>
    <property type="match status" value="1"/>
</dbReference>
<dbReference type="Pfam" id="PF00892">
    <property type="entry name" value="EamA"/>
    <property type="match status" value="1"/>
</dbReference>
<dbReference type="SUPFAM" id="SSF103481">
    <property type="entry name" value="Multidrug resistance efflux transporter EmrE"/>
    <property type="match status" value="1"/>
</dbReference>
<protein>
    <recommendedName>
        <fullName evidence="1">Probable 4-amino-4-deoxy-L-arabinose-phosphoundecaprenol flippase subunit ArnE</fullName>
        <shortName evidence="1">L-Ara4N-phosphoundecaprenol flippase subunit ArnE</shortName>
    </recommendedName>
    <alternativeName>
        <fullName evidence="1">Undecaprenyl phosphate-aminoarabinose flippase subunit ArnE</fullName>
    </alternativeName>
</protein>
<name>ARNE_PSEPF</name>
<gene>
    <name evidence="1" type="primary">arnE</name>
    <name type="ordered locus">Pfl01_2846</name>
</gene>
<reference key="1">
    <citation type="journal article" date="2009" name="Genome Biol.">
        <title>Genomic and genetic analyses of diversity and plant interactions of Pseudomonas fluorescens.</title>
        <authorList>
            <person name="Silby M.W."/>
            <person name="Cerdeno-Tarraga A.M."/>
            <person name="Vernikos G.S."/>
            <person name="Giddens S.R."/>
            <person name="Jackson R.W."/>
            <person name="Preston G.M."/>
            <person name="Zhang X.-X."/>
            <person name="Moon C.D."/>
            <person name="Gehrig S.M."/>
            <person name="Godfrey S.A.C."/>
            <person name="Knight C.G."/>
            <person name="Malone J.G."/>
            <person name="Robinson Z."/>
            <person name="Spiers A.J."/>
            <person name="Harris S."/>
            <person name="Challis G.L."/>
            <person name="Yaxley A.M."/>
            <person name="Harris D."/>
            <person name="Seeger K."/>
            <person name="Murphy L."/>
            <person name="Rutter S."/>
            <person name="Squares R."/>
            <person name="Quail M.A."/>
            <person name="Saunders E."/>
            <person name="Mavromatis K."/>
            <person name="Brettin T.S."/>
            <person name="Bentley S.D."/>
            <person name="Hothersall J."/>
            <person name="Stephens E."/>
            <person name="Thomas C.M."/>
            <person name="Parkhill J."/>
            <person name="Levy S.B."/>
            <person name="Rainey P.B."/>
            <person name="Thomson N.R."/>
        </authorList>
    </citation>
    <scope>NUCLEOTIDE SEQUENCE [LARGE SCALE GENOMIC DNA]</scope>
    <source>
        <strain>Pf0-1</strain>
    </source>
</reference>
<sequence>MSLWLLLLACLLTCLGQVAQKCAVENWRGADLSWSRKWRSPWLWLALFALGSGLLVWLLVLQRLPVSVAYPMLSLNFVIITLIARFVFKEPVDVQHWFGVLLVIGGVALLGQQS</sequence>
<keyword id="KW-0997">Cell inner membrane</keyword>
<keyword id="KW-1003">Cell membrane</keyword>
<keyword id="KW-0441">Lipid A biosynthesis</keyword>
<keyword id="KW-0444">Lipid biosynthesis</keyword>
<keyword id="KW-0443">Lipid metabolism</keyword>
<keyword id="KW-0448">Lipopolysaccharide biosynthesis</keyword>
<keyword id="KW-0472">Membrane</keyword>
<keyword id="KW-0812">Transmembrane</keyword>
<keyword id="KW-1133">Transmembrane helix</keyword>
<keyword id="KW-0813">Transport</keyword>
<organism>
    <name type="scientific">Pseudomonas fluorescens (strain Pf0-1)</name>
    <dbReference type="NCBI Taxonomy" id="205922"/>
    <lineage>
        <taxon>Bacteria</taxon>
        <taxon>Pseudomonadati</taxon>
        <taxon>Pseudomonadota</taxon>
        <taxon>Gammaproteobacteria</taxon>
        <taxon>Pseudomonadales</taxon>
        <taxon>Pseudomonadaceae</taxon>
        <taxon>Pseudomonas</taxon>
    </lineage>
</organism>
<proteinExistence type="inferred from homology"/>
<accession>Q3KCB8</accession>